<accession>B9K767</accession>
<protein>
    <recommendedName>
        <fullName evidence="1">Mannonate dehydratase</fullName>
        <ecNumber evidence="1">4.2.1.8</ecNumber>
    </recommendedName>
    <alternativeName>
        <fullName evidence="1">D-mannonate hydro-lyase</fullName>
    </alternativeName>
</protein>
<keyword id="KW-0408">Iron</keyword>
<keyword id="KW-0456">Lyase</keyword>
<keyword id="KW-0464">Manganese</keyword>
<name>UXUA_THENN</name>
<sequence length="360" mass="41723">MKLVFRWFGEKHDTVTLEQIRQIPGVEGVVGALFDIPVGEVWPLEEIMKLKETVERAGLKLEVIESVNVHEDIKLGLPTRDRYIENYKETIRNLAKAGVKVVCYNFMPVFDWMRTDLHKKLPDGSETMEYDHSLIEGVTPDELIERVKEGSEGFVLPGWEWDRLEKLRETFELYKNVDEEKLFENLVYFLERVIPVCEECDVKLAIHPDDPPWSIFGLPRIITNKENIERLLKAVDSPYNGITLCMGSLGANPENNIPEMIRYFGKMGRIHFAHVRNLKFTGEKSFYETAHPSFCGSHDLFEVMKAFHDIGYEGYIRPDHGRLIWGEKARPGYGLYDRALGATYILGLWEAISKMKERYC</sequence>
<gene>
    <name evidence="1" type="primary">uxuA</name>
    <name type="ordered locus">CTN_0624</name>
</gene>
<feature type="chain" id="PRO_1000197936" description="Mannonate dehydratase">
    <location>
        <begin position="1"/>
        <end position="360"/>
    </location>
</feature>
<dbReference type="EC" id="4.2.1.8" evidence="1"/>
<dbReference type="EMBL" id="CP000916">
    <property type="protein sequence ID" value="ACM22800.1"/>
    <property type="molecule type" value="Genomic_DNA"/>
</dbReference>
<dbReference type="RefSeq" id="WP_015919119.1">
    <property type="nucleotide sequence ID" value="NC_011978.1"/>
</dbReference>
<dbReference type="SMR" id="B9K767"/>
<dbReference type="STRING" id="309803.CTN_0624"/>
<dbReference type="KEGG" id="tna:CTN_0624"/>
<dbReference type="eggNOG" id="COG1312">
    <property type="taxonomic scope" value="Bacteria"/>
</dbReference>
<dbReference type="HOGENOM" id="CLU_058621_1_0_0"/>
<dbReference type="UniPathway" id="UPA00246"/>
<dbReference type="Proteomes" id="UP000000445">
    <property type="component" value="Chromosome"/>
</dbReference>
<dbReference type="GO" id="GO:0008198">
    <property type="term" value="F:ferrous iron binding"/>
    <property type="evidence" value="ECO:0007669"/>
    <property type="project" value="TreeGrafter"/>
</dbReference>
<dbReference type="GO" id="GO:0030145">
    <property type="term" value="F:manganese ion binding"/>
    <property type="evidence" value="ECO:0007669"/>
    <property type="project" value="TreeGrafter"/>
</dbReference>
<dbReference type="GO" id="GO:0008927">
    <property type="term" value="F:mannonate dehydratase activity"/>
    <property type="evidence" value="ECO:0007669"/>
    <property type="project" value="UniProtKB-UniRule"/>
</dbReference>
<dbReference type="GO" id="GO:0042840">
    <property type="term" value="P:D-glucuronate catabolic process"/>
    <property type="evidence" value="ECO:0007669"/>
    <property type="project" value="TreeGrafter"/>
</dbReference>
<dbReference type="Gene3D" id="3.20.20.150">
    <property type="entry name" value="Divalent-metal-dependent TIM barrel enzymes"/>
    <property type="match status" value="1"/>
</dbReference>
<dbReference type="HAMAP" id="MF_00106">
    <property type="entry name" value="UxuA"/>
    <property type="match status" value="1"/>
</dbReference>
<dbReference type="InterPro" id="IPR004628">
    <property type="entry name" value="Man_deHydtase"/>
</dbReference>
<dbReference type="InterPro" id="IPR036237">
    <property type="entry name" value="Xyl_isomerase-like_sf"/>
</dbReference>
<dbReference type="NCBIfam" id="NF003027">
    <property type="entry name" value="PRK03906.1"/>
    <property type="match status" value="1"/>
</dbReference>
<dbReference type="NCBIfam" id="TIGR00695">
    <property type="entry name" value="uxuA"/>
    <property type="match status" value="1"/>
</dbReference>
<dbReference type="PANTHER" id="PTHR30387">
    <property type="entry name" value="MANNONATE DEHYDRATASE"/>
    <property type="match status" value="1"/>
</dbReference>
<dbReference type="PANTHER" id="PTHR30387:SF2">
    <property type="entry name" value="MANNONATE DEHYDRATASE"/>
    <property type="match status" value="1"/>
</dbReference>
<dbReference type="Pfam" id="PF03786">
    <property type="entry name" value="UxuA"/>
    <property type="match status" value="1"/>
</dbReference>
<dbReference type="PIRSF" id="PIRSF016049">
    <property type="entry name" value="Man_dehyd"/>
    <property type="match status" value="1"/>
</dbReference>
<dbReference type="SUPFAM" id="SSF51658">
    <property type="entry name" value="Xylose isomerase-like"/>
    <property type="match status" value="1"/>
</dbReference>
<evidence type="ECO:0000255" key="1">
    <source>
        <dbReference type="HAMAP-Rule" id="MF_00106"/>
    </source>
</evidence>
<organism>
    <name type="scientific">Thermotoga neapolitana (strain ATCC 49049 / DSM 4359 / NBRC 107923 / NS-E)</name>
    <dbReference type="NCBI Taxonomy" id="309803"/>
    <lineage>
        <taxon>Bacteria</taxon>
        <taxon>Thermotogati</taxon>
        <taxon>Thermotogota</taxon>
        <taxon>Thermotogae</taxon>
        <taxon>Thermotogales</taxon>
        <taxon>Thermotogaceae</taxon>
        <taxon>Thermotoga</taxon>
    </lineage>
</organism>
<reference key="1">
    <citation type="submission" date="2007-11" db="EMBL/GenBank/DDBJ databases">
        <title>The genome sequence of the hyperthermophilic bacterium Thermotoga neapolitana.</title>
        <authorList>
            <person name="Lim S.K."/>
            <person name="Kim J.S."/>
            <person name="Cha S.H."/>
            <person name="Park B.C."/>
            <person name="Lee D.S."/>
            <person name="Tae H.S."/>
            <person name="Kim S.-J."/>
            <person name="Kim J.J."/>
            <person name="Park K.J."/>
            <person name="Lee S.Y."/>
        </authorList>
    </citation>
    <scope>NUCLEOTIDE SEQUENCE [LARGE SCALE GENOMIC DNA]</scope>
    <source>
        <strain>ATCC 49049 / DSM 4359 / NBRC 107923 / NS-E</strain>
    </source>
</reference>
<comment type="function">
    <text evidence="1">Catalyzes the dehydration of D-mannonate.</text>
</comment>
<comment type="catalytic activity">
    <reaction evidence="1">
        <text>D-mannonate = 2-dehydro-3-deoxy-D-gluconate + H2O</text>
        <dbReference type="Rhea" id="RHEA:20097"/>
        <dbReference type="ChEBI" id="CHEBI:15377"/>
        <dbReference type="ChEBI" id="CHEBI:17767"/>
        <dbReference type="ChEBI" id="CHEBI:57990"/>
        <dbReference type="EC" id="4.2.1.8"/>
    </reaction>
</comment>
<comment type="cofactor">
    <cofactor evidence="1">
        <name>Fe(2+)</name>
        <dbReference type="ChEBI" id="CHEBI:29033"/>
    </cofactor>
    <cofactor evidence="1">
        <name>Mn(2+)</name>
        <dbReference type="ChEBI" id="CHEBI:29035"/>
    </cofactor>
</comment>
<comment type="pathway">
    <text evidence="1">Carbohydrate metabolism; pentose and glucuronate interconversion.</text>
</comment>
<comment type="similarity">
    <text evidence="1">Belongs to the mannonate dehydratase family.</text>
</comment>
<proteinExistence type="inferred from homology"/>